<dbReference type="EMBL" id="CP000920">
    <property type="protein sequence ID" value="ACO21536.1"/>
    <property type="molecule type" value="Genomic_DNA"/>
</dbReference>
<dbReference type="SMR" id="C1CLR7"/>
<dbReference type="KEGG" id="spp:SPP_1591"/>
<dbReference type="HOGENOM" id="CLU_033732_3_0_9"/>
<dbReference type="GO" id="GO:0005829">
    <property type="term" value="C:cytosol"/>
    <property type="evidence" value="ECO:0007669"/>
    <property type="project" value="TreeGrafter"/>
</dbReference>
<dbReference type="GO" id="GO:0005525">
    <property type="term" value="F:GTP binding"/>
    <property type="evidence" value="ECO:0007669"/>
    <property type="project" value="UniProtKB-UniRule"/>
</dbReference>
<dbReference type="GO" id="GO:0046872">
    <property type="term" value="F:metal ion binding"/>
    <property type="evidence" value="ECO:0007669"/>
    <property type="project" value="UniProtKB-KW"/>
</dbReference>
<dbReference type="GO" id="GO:0000917">
    <property type="term" value="P:division septum assembly"/>
    <property type="evidence" value="ECO:0007669"/>
    <property type="project" value="UniProtKB-KW"/>
</dbReference>
<dbReference type="CDD" id="cd01876">
    <property type="entry name" value="YihA_EngB"/>
    <property type="match status" value="1"/>
</dbReference>
<dbReference type="FunFam" id="3.40.50.300:FF:000098">
    <property type="entry name" value="Probable GTP-binding protein EngB"/>
    <property type="match status" value="1"/>
</dbReference>
<dbReference type="Gene3D" id="3.40.50.300">
    <property type="entry name" value="P-loop containing nucleotide triphosphate hydrolases"/>
    <property type="match status" value="1"/>
</dbReference>
<dbReference type="HAMAP" id="MF_00321">
    <property type="entry name" value="GTPase_EngB"/>
    <property type="match status" value="1"/>
</dbReference>
<dbReference type="InterPro" id="IPR030393">
    <property type="entry name" value="G_ENGB_dom"/>
</dbReference>
<dbReference type="InterPro" id="IPR006073">
    <property type="entry name" value="GTP-bd"/>
</dbReference>
<dbReference type="InterPro" id="IPR019987">
    <property type="entry name" value="GTP-bd_ribosome_bio_YsxC"/>
</dbReference>
<dbReference type="InterPro" id="IPR027417">
    <property type="entry name" value="P-loop_NTPase"/>
</dbReference>
<dbReference type="NCBIfam" id="TIGR03598">
    <property type="entry name" value="GTPase_YsxC"/>
    <property type="match status" value="1"/>
</dbReference>
<dbReference type="PANTHER" id="PTHR11649:SF13">
    <property type="entry name" value="ENGB-TYPE G DOMAIN-CONTAINING PROTEIN"/>
    <property type="match status" value="1"/>
</dbReference>
<dbReference type="PANTHER" id="PTHR11649">
    <property type="entry name" value="MSS1/TRME-RELATED GTP-BINDING PROTEIN"/>
    <property type="match status" value="1"/>
</dbReference>
<dbReference type="Pfam" id="PF01926">
    <property type="entry name" value="MMR_HSR1"/>
    <property type="match status" value="1"/>
</dbReference>
<dbReference type="PRINTS" id="PR00449">
    <property type="entry name" value="RASTRNSFRMNG"/>
</dbReference>
<dbReference type="SUPFAM" id="SSF52540">
    <property type="entry name" value="P-loop containing nucleoside triphosphate hydrolases"/>
    <property type="match status" value="1"/>
</dbReference>
<dbReference type="PROSITE" id="PS51706">
    <property type="entry name" value="G_ENGB"/>
    <property type="match status" value="1"/>
</dbReference>
<name>ENGB_STRZP</name>
<evidence type="ECO:0000255" key="1">
    <source>
        <dbReference type="HAMAP-Rule" id="MF_00321"/>
    </source>
</evidence>
<proteinExistence type="inferred from homology"/>
<accession>C1CLR7</accession>
<protein>
    <recommendedName>
        <fullName evidence="1">Probable GTP-binding protein EngB</fullName>
    </recommendedName>
</protein>
<sequence>MELNIHNAEILLSAANKSHYPQDELPEIALAGRSNVGKSSFINTMLNRKNLARTSGKPGKTQLLNFFNIDDKMRFVDVPGYGYARVSKKEREKWGCMIEEYLTTRENLRAVVSLVDLRHDPSADDVQMYEFLKYYEIPVIIVATKADKIPRGKWNKHESAIKKKLNFDPSDDFILFSSVSKAGMDEAWDAILEKL</sequence>
<keyword id="KW-0131">Cell cycle</keyword>
<keyword id="KW-0132">Cell division</keyword>
<keyword id="KW-0342">GTP-binding</keyword>
<keyword id="KW-0460">Magnesium</keyword>
<keyword id="KW-0479">Metal-binding</keyword>
<keyword id="KW-0547">Nucleotide-binding</keyword>
<keyword id="KW-0717">Septation</keyword>
<organism>
    <name type="scientific">Streptococcus pneumoniae (strain P1031)</name>
    <dbReference type="NCBI Taxonomy" id="488223"/>
    <lineage>
        <taxon>Bacteria</taxon>
        <taxon>Bacillati</taxon>
        <taxon>Bacillota</taxon>
        <taxon>Bacilli</taxon>
        <taxon>Lactobacillales</taxon>
        <taxon>Streptococcaceae</taxon>
        <taxon>Streptococcus</taxon>
    </lineage>
</organism>
<feature type="chain" id="PRO_1000189939" description="Probable GTP-binding protein EngB">
    <location>
        <begin position="1"/>
        <end position="195"/>
    </location>
</feature>
<feature type="domain" description="EngB-type G" evidence="1">
    <location>
        <begin position="24"/>
        <end position="195"/>
    </location>
</feature>
<feature type="binding site" evidence="1">
    <location>
        <begin position="32"/>
        <end position="39"/>
    </location>
    <ligand>
        <name>GTP</name>
        <dbReference type="ChEBI" id="CHEBI:37565"/>
    </ligand>
</feature>
<feature type="binding site" evidence="1">
    <location>
        <position position="39"/>
    </location>
    <ligand>
        <name>Mg(2+)</name>
        <dbReference type="ChEBI" id="CHEBI:18420"/>
    </ligand>
</feature>
<feature type="binding site" evidence="1">
    <location>
        <begin position="59"/>
        <end position="63"/>
    </location>
    <ligand>
        <name>GTP</name>
        <dbReference type="ChEBI" id="CHEBI:37565"/>
    </ligand>
</feature>
<feature type="binding site" evidence="1">
    <location>
        <position position="61"/>
    </location>
    <ligand>
        <name>Mg(2+)</name>
        <dbReference type="ChEBI" id="CHEBI:18420"/>
    </ligand>
</feature>
<feature type="binding site" evidence="1">
    <location>
        <begin position="77"/>
        <end position="80"/>
    </location>
    <ligand>
        <name>GTP</name>
        <dbReference type="ChEBI" id="CHEBI:37565"/>
    </ligand>
</feature>
<feature type="binding site" evidence="1">
    <location>
        <begin position="144"/>
        <end position="147"/>
    </location>
    <ligand>
        <name>GTP</name>
        <dbReference type="ChEBI" id="CHEBI:37565"/>
    </ligand>
</feature>
<feature type="binding site" evidence="1">
    <location>
        <begin position="176"/>
        <end position="178"/>
    </location>
    <ligand>
        <name>GTP</name>
        <dbReference type="ChEBI" id="CHEBI:37565"/>
    </ligand>
</feature>
<gene>
    <name evidence="1" type="primary">engB</name>
    <name type="ordered locus">SPP_1591</name>
</gene>
<reference key="1">
    <citation type="journal article" date="2010" name="Genome Biol.">
        <title>Structure and dynamics of the pan-genome of Streptococcus pneumoniae and closely related species.</title>
        <authorList>
            <person name="Donati C."/>
            <person name="Hiller N.L."/>
            <person name="Tettelin H."/>
            <person name="Muzzi A."/>
            <person name="Croucher N.J."/>
            <person name="Angiuoli S.V."/>
            <person name="Oggioni M."/>
            <person name="Dunning Hotopp J.C."/>
            <person name="Hu F.Z."/>
            <person name="Riley D.R."/>
            <person name="Covacci A."/>
            <person name="Mitchell T.J."/>
            <person name="Bentley S.D."/>
            <person name="Kilian M."/>
            <person name="Ehrlich G.D."/>
            <person name="Rappuoli R."/>
            <person name="Moxon E.R."/>
            <person name="Masignani V."/>
        </authorList>
    </citation>
    <scope>NUCLEOTIDE SEQUENCE [LARGE SCALE GENOMIC DNA]</scope>
    <source>
        <strain>P1031</strain>
    </source>
</reference>
<comment type="function">
    <text evidence="1">Necessary for normal cell division and for the maintenance of normal septation.</text>
</comment>
<comment type="cofactor">
    <cofactor evidence="1">
        <name>Mg(2+)</name>
        <dbReference type="ChEBI" id="CHEBI:18420"/>
    </cofactor>
</comment>
<comment type="similarity">
    <text evidence="1">Belongs to the TRAFAC class TrmE-Era-EngA-EngB-Septin-like GTPase superfamily. EngB GTPase family.</text>
</comment>